<gene>
    <name evidence="1" type="primary">galK</name>
    <name type="ordered locus">VV2637</name>
</gene>
<dbReference type="EC" id="2.7.1.6" evidence="1"/>
<dbReference type="EMBL" id="BA000037">
    <property type="protein sequence ID" value="BAC95401.1"/>
    <property type="molecule type" value="Genomic_DNA"/>
</dbReference>
<dbReference type="RefSeq" id="WP_011151024.1">
    <property type="nucleotide sequence ID" value="NC_005139.1"/>
</dbReference>
<dbReference type="SMR" id="Q7MI80"/>
<dbReference type="STRING" id="672.VV93_v1c23550"/>
<dbReference type="KEGG" id="vvy:VV2637"/>
<dbReference type="PATRIC" id="fig|196600.6.peg.2637"/>
<dbReference type="eggNOG" id="COG0153">
    <property type="taxonomic scope" value="Bacteria"/>
</dbReference>
<dbReference type="HOGENOM" id="CLU_017814_2_1_6"/>
<dbReference type="UniPathway" id="UPA00214"/>
<dbReference type="Proteomes" id="UP000002675">
    <property type="component" value="Chromosome I"/>
</dbReference>
<dbReference type="GO" id="GO:0005829">
    <property type="term" value="C:cytosol"/>
    <property type="evidence" value="ECO:0007669"/>
    <property type="project" value="TreeGrafter"/>
</dbReference>
<dbReference type="GO" id="GO:0005524">
    <property type="term" value="F:ATP binding"/>
    <property type="evidence" value="ECO:0007669"/>
    <property type="project" value="UniProtKB-UniRule"/>
</dbReference>
<dbReference type="GO" id="GO:0004335">
    <property type="term" value="F:galactokinase activity"/>
    <property type="evidence" value="ECO:0007669"/>
    <property type="project" value="UniProtKB-UniRule"/>
</dbReference>
<dbReference type="GO" id="GO:0000287">
    <property type="term" value="F:magnesium ion binding"/>
    <property type="evidence" value="ECO:0007669"/>
    <property type="project" value="UniProtKB-UniRule"/>
</dbReference>
<dbReference type="GO" id="GO:0006012">
    <property type="term" value="P:galactose metabolic process"/>
    <property type="evidence" value="ECO:0007669"/>
    <property type="project" value="UniProtKB-UniRule"/>
</dbReference>
<dbReference type="FunFam" id="3.30.230.10:FF:000017">
    <property type="entry name" value="Galactokinase"/>
    <property type="match status" value="1"/>
</dbReference>
<dbReference type="FunFam" id="3.30.70.890:FF:000001">
    <property type="entry name" value="Galactokinase"/>
    <property type="match status" value="1"/>
</dbReference>
<dbReference type="Gene3D" id="3.30.230.10">
    <property type="match status" value="1"/>
</dbReference>
<dbReference type="Gene3D" id="3.30.70.890">
    <property type="entry name" value="GHMP kinase, C-terminal domain"/>
    <property type="match status" value="1"/>
</dbReference>
<dbReference type="HAMAP" id="MF_00246">
    <property type="entry name" value="Galactokinase"/>
    <property type="match status" value="1"/>
</dbReference>
<dbReference type="InterPro" id="IPR000705">
    <property type="entry name" value="Galactokinase"/>
</dbReference>
<dbReference type="InterPro" id="IPR022963">
    <property type="entry name" value="Galactokinase_bac"/>
</dbReference>
<dbReference type="InterPro" id="IPR019741">
    <property type="entry name" value="Galactokinase_CS"/>
</dbReference>
<dbReference type="InterPro" id="IPR019539">
    <property type="entry name" value="GalKase_N"/>
</dbReference>
<dbReference type="InterPro" id="IPR013750">
    <property type="entry name" value="GHMP_kinase_C_dom"/>
</dbReference>
<dbReference type="InterPro" id="IPR036554">
    <property type="entry name" value="GHMP_kinase_C_sf"/>
</dbReference>
<dbReference type="InterPro" id="IPR006204">
    <property type="entry name" value="GHMP_kinase_N_dom"/>
</dbReference>
<dbReference type="InterPro" id="IPR006203">
    <property type="entry name" value="GHMP_knse_ATP-bd_CS"/>
</dbReference>
<dbReference type="InterPro" id="IPR006206">
    <property type="entry name" value="Mevalonate/galactokinase"/>
</dbReference>
<dbReference type="InterPro" id="IPR020568">
    <property type="entry name" value="Ribosomal_Su5_D2-typ_SF"/>
</dbReference>
<dbReference type="InterPro" id="IPR014721">
    <property type="entry name" value="Ribsml_uS5_D2-typ_fold_subgr"/>
</dbReference>
<dbReference type="NCBIfam" id="TIGR00131">
    <property type="entry name" value="gal_kin"/>
    <property type="match status" value="1"/>
</dbReference>
<dbReference type="NCBIfam" id="NF003472">
    <property type="entry name" value="PRK05101.1"/>
    <property type="match status" value="1"/>
</dbReference>
<dbReference type="NCBIfam" id="NF003705">
    <property type="entry name" value="PRK05322.1"/>
    <property type="match status" value="1"/>
</dbReference>
<dbReference type="PANTHER" id="PTHR10457:SF7">
    <property type="entry name" value="GALACTOKINASE-RELATED"/>
    <property type="match status" value="1"/>
</dbReference>
<dbReference type="PANTHER" id="PTHR10457">
    <property type="entry name" value="MEVALONATE KINASE/GALACTOKINASE"/>
    <property type="match status" value="1"/>
</dbReference>
<dbReference type="Pfam" id="PF10509">
    <property type="entry name" value="GalKase_gal_bdg"/>
    <property type="match status" value="1"/>
</dbReference>
<dbReference type="Pfam" id="PF08544">
    <property type="entry name" value="GHMP_kinases_C"/>
    <property type="match status" value="1"/>
</dbReference>
<dbReference type="Pfam" id="PF00288">
    <property type="entry name" value="GHMP_kinases_N"/>
    <property type="match status" value="1"/>
</dbReference>
<dbReference type="PIRSF" id="PIRSF000530">
    <property type="entry name" value="Galactokinase"/>
    <property type="match status" value="1"/>
</dbReference>
<dbReference type="PRINTS" id="PR00473">
    <property type="entry name" value="GALCTOKINASE"/>
</dbReference>
<dbReference type="PRINTS" id="PR00959">
    <property type="entry name" value="MEVGALKINASE"/>
</dbReference>
<dbReference type="SUPFAM" id="SSF55060">
    <property type="entry name" value="GHMP Kinase, C-terminal domain"/>
    <property type="match status" value="1"/>
</dbReference>
<dbReference type="SUPFAM" id="SSF54211">
    <property type="entry name" value="Ribosomal protein S5 domain 2-like"/>
    <property type="match status" value="1"/>
</dbReference>
<dbReference type="PROSITE" id="PS00106">
    <property type="entry name" value="GALACTOKINASE"/>
    <property type="match status" value="1"/>
</dbReference>
<dbReference type="PROSITE" id="PS00627">
    <property type="entry name" value="GHMP_KINASES_ATP"/>
    <property type="match status" value="1"/>
</dbReference>
<evidence type="ECO:0000255" key="1">
    <source>
        <dbReference type="HAMAP-Rule" id="MF_00246"/>
    </source>
</evidence>
<accession>Q7MI80</accession>
<protein>
    <recommendedName>
        <fullName evidence="1">Galactokinase</fullName>
        <ecNumber evidence="1">2.7.1.6</ecNumber>
    </recommendedName>
    <alternativeName>
        <fullName evidence="1">Galactose kinase</fullName>
    </alternativeName>
</protein>
<keyword id="KW-0067">ATP-binding</keyword>
<keyword id="KW-0119">Carbohydrate metabolism</keyword>
<keyword id="KW-0963">Cytoplasm</keyword>
<keyword id="KW-0299">Galactose metabolism</keyword>
<keyword id="KW-0418">Kinase</keyword>
<keyword id="KW-0460">Magnesium</keyword>
<keyword id="KW-0479">Metal-binding</keyword>
<keyword id="KW-0547">Nucleotide-binding</keyword>
<keyword id="KW-0808">Transferase</keyword>
<comment type="function">
    <text evidence="1">Catalyzes the transfer of the gamma-phosphate of ATP to D-galactose to form alpha-D-galactose-1-phosphate (Gal-1-P).</text>
</comment>
<comment type="catalytic activity">
    <reaction evidence="1">
        <text>alpha-D-galactose + ATP = alpha-D-galactose 1-phosphate + ADP + H(+)</text>
        <dbReference type="Rhea" id="RHEA:13553"/>
        <dbReference type="ChEBI" id="CHEBI:15378"/>
        <dbReference type="ChEBI" id="CHEBI:28061"/>
        <dbReference type="ChEBI" id="CHEBI:30616"/>
        <dbReference type="ChEBI" id="CHEBI:58336"/>
        <dbReference type="ChEBI" id="CHEBI:456216"/>
        <dbReference type="EC" id="2.7.1.6"/>
    </reaction>
</comment>
<comment type="pathway">
    <text evidence="1">Carbohydrate metabolism; galactose metabolism.</text>
</comment>
<comment type="subcellular location">
    <subcellularLocation>
        <location evidence="1">Cytoplasm</location>
    </subcellularLocation>
</comment>
<comment type="similarity">
    <text evidence="1">Belongs to the GHMP kinase family. GalK subfamily.</text>
</comment>
<name>GAL1_VIBVY</name>
<organism>
    <name type="scientific">Vibrio vulnificus (strain YJ016)</name>
    <dbReference type="NCBI Taxonomy" id="196600"/>
    <lineage>
        <taxon>Bacteria</taxon>
        <taxon>Pseudomonadati</taxon>
        <taxon>Pseudomonadota</taxon>
        <taxon>Gammaproteobacteria</taxon>
        <taxon>Vibrionales</taxon>
        <taxon>Vibrionaceae</taxon>
        <taxon>Vibrio</taxon>
    </lineage>
</organism>
<sequence length="386" mass="42065">MSELIQNVKTSFEQVLGYAPSHIIQAPGRVNLIGEHTDYNDGFVLPCAINYQTVVAAAKREDNLVRVVSVDYGNAVDEFDITQAITFQQDKMWANYIRGVVKCLLARGYAFTGADISVSGNVPQGAGLSSSAALEVVIGQTFKVLFNLEISQAEIALNGQQAENEFVGCNCGIMDQMISAEGRENHAMLLDCRSLETESVSMPEEMAVVIINSNKKRGLVDSEYNTRRQQCEEAARIFGVKALRDVTIEQFNEKVAELDEMVAKRARHVITENDRTVEAAQALRAHDMKRMGELMAESHASMRDDFEITVKEIDTLVEIVKEVIGDQGGVRMTGGGFGGCIVALVPPALVDDVKATVAAKYQAATGLKESIYVCQAKDGAGLVEML</sequence>
<feature type="chain" id="PRO_0000184639" description="Galactokinase">
    <location>
        <begin position="1"/>
        <end position="386"/>
    </location>
</feature>
<feature type="active site" description="Proton acceptor" evidence="1">
    <location>
        <position position="175"/>
    </location>
</feature>
<feature type="binding site" evidence="1">
    <location>
        <begin position="35"/>
        <end position="38"/>
    </location>
    <ligand>
        <name>substrate</name>
    </ligand>
</feature>
<feature type="binding site" evidence="1">
    <location>
        <position position="69"/>
    </location>
    <ligand>
        <name>ATP</name>
        <dbReference type="ChEBI" id="CHEBI:30616"/>
    </ligand>
</feature>
<feature type="binding site" evidence="1">
    <location>
        <begin position="125"/>
        <end position="131"/>
    </location>
    <ligand>
        <name>ATP</name>
        <dbReference type="ChEBI" id="CHEBI:30616"/>
    </ligand>
</feature>
<feature type="binding site" evidence="1">
    <location>
        <position position="131"/>
    </location>
    <ligand>
        <name>Mg(2+)</name>
        <dbReference type="ChEBI" id="CHEBI:18420"/>
    </ligand>
</feature>
<feature type="binding site" evidence="1">
    <location>
        <position position="163"/>
    </location>
    <ligand>
        <name>Mg(2+)</name>
        <dbReference type="ChEBI" id="CHEBI:18420"/>
    </ligand>
</feature>
<feature type="binding site" evidence="1">
    <location>
        <position position="224"/>
    </location>
    <ligand>
        <name>substrate</name>
    </ligand>
</feature>
<feature type="site" description="Transition state stabilizer" evidence="1">
    <location>
        <position position="29"/>
    </location>
</feature>
<reference key="1">
    <citation type="journal article" date="2003" name="Genome Res.">
        <title>Comparative genome analysis of Vibrio vulnificus, a marine pathogen.</title>
        <authorList>
            <person name="Chen C.-Y."/>
            <person name="Wu K.-M."/>
            <person name="Chang Y.-C."/>
            <person name="Chang C.-H."/>
            <person name="Tsai H.-C."/>
            <person name="Liao T.-L."/>
            <person name="Liu Y.-M."/>
            <person name="Chen H.-J."/>
            <person name="Shen A.B.-T."/>
            <person name="Li J.-C."/>
            <person name="Su T.-L."/>
            <person name="Shao C.-P."/>
            <person name="Lee C.-T."/>
            <person name="Hor L.-I."/>
            <person name="Tsai S.-F."/>
        </authorList>
    </citation>
    <scope>NUCLEOTIDE SEQUENCE [LARGE SCALE GENOMIC DNA]</scope>
    <source>
        <strain>YJ016</strain>
    </source>
</reference>
<proteinExistence type="inferred from homology"/>